<accession>Q65VD2</accession>
<organism>
    <name type="scientific">Mannheimia succiniciproducens (strain KCTC 0769BP / MBEL55E)</name>
    <dbReference type="NCBI Taxonomy" id="221988"/>
    <lineage>
        <taxon>Bacteria</taxon>
        <taxon>Pseudomonadati</taxon>
        <taxon>Pseudomonadota</taxon>
        <taxon>Gammaproteobacteria</taxon>
        <taxon>Pasteurellales</taxon>
        <taxon>Pasteurellaceae</taxon>
        <taxon>Basfia</taxon>
    </lineage>
</organism>
<protein>
    <recommendedName>
        <fullName evidence="1">Small ribosomal subunit protein bS18</fullName>
    </recommendedName>
    <alternativeName>
        <fullName evidence="2">30S ribosomal protein S18</fullName>
    </alternativeName>
</protein>
<keyword id="KW-0687">Ribonucleoprotein</keyword>
<keyword id="KW-0689">Ribosomal protein</keyword>
<keyword id="KW-0694">RNA-binding</keyword>
<keyword id="KW-0699">rRNA-binding</keyword>
<gene>
    <name evidence="1" type="primary">rpsR</name>
    <name type="ordered locus">MS0471</name>
</gene>
<dbReference type="EMBL" id="AE016827">
    <property type="protein sequence ID" value="AAU37078.1"/>
    <property type="molecule type" value="Genomic_DNA"/>
</dbReference>
<dbReference type="RefSeq" id="WP_005759927.1">
    <property type="nucleotide sequence ID" value="NC_006300.1"/>
</dbReference>
<dbReference type="SMR" id="Q65VD2"/>
<dbReference type="STRING" id="221988.MS0471"/>
<dbReference type="GeneID" id="93226450"/>
<dbReference type="KEGG" id="msu:MS0471"/>
<dbReference type="eggNOG" id="COG0238">
    <property type="taxonomic scope" value="Bacteria"/>
</dbReference>
<dbReference type="HOGENOM" id="CLU_148710_2_2_6"/>
<dbReference type="OrthoDB" id="9812008at2"/>
<dbReference type="Proteomes" id="UP000000607">
    <property type="component" value="Chromosome"/>
</dbReference>
<dbReference type="GO" id="GO:0022627">
    <property type="term" value="C:cytosolic small ribosomal subunit"/>
    <property type="evidence" value="ECO:0007669"/>
    <property type="project" value="TreeGrafter"/>
</dbReference>
<dbReference type="GO" id="GO:0070181">
    <property type="term" value="F:small ribosomal subunit rRNA binding"/>
    <property type="evidence" value="ECO:0007669"/>
    <property type="project" value="TreeGrafter"/>
</dbReference>
<dbReference type="GO" id="GO:0003735">
    <property type="term" value="F:structural constituent of ribosome"/>
    <property type="evidence" value="ECO:0007669"/>
    <property type="project" value="InterPro"/>
</dbReference>
<dbReference type="GO" id="GO:0006412">
    <property type="term" value="P:translation"/>
    <property type="evidence" value="ECO:0007669"/>
    <property type="project" value="UniProtKB-UniRule"/>
</dbReference>
<dbReference type="FunFam" id="4.10.640.10:FF:000001">
    <property type="entry name" value="30S ribosomal protein S18"/>
    <property type="match status" value="1"/>
</dbReference>
<dbReference type="Gene3D" id="4.10.640.10">
    <property type="entry name" value="Ribosomal protein S18"/>
    <property type="match status" value="1"/>
</dbReference>
<dbReference type="HAMAP" id="MF_00270">
    <property type="entry name" value="Ribosomal_bS18"/>
    <property type="match status" value="1"/>
</dbReference>
<dbReference type="InterPro" id="IPR001648">
    <property type="entry name" value="Ribosomal_bS18"/>
</dbReference>
<dbReference type="InterPro" id="IPR018275">
    <property type="entry name" value="Ribosomal_bS18_CS"/>
</dbReference>
<dbReference type="InterPro" id="IPR036870">
    <property type="entry name" value="Ribosomal_bS18_sf"/>
</dbReference>
<dbReference type="NCBIfam" id="TIGR00165">
    <property type="entry name" value="S18"/>
    <property type="match status" value="1"/>
</dbReference>
<dbReference type="PANTHER" id="PTHR13479">
    <property type="entry name" value="30S RIBOSOMAL PROTEIN S18"/>
    <property type="match status" value="1"/>
</dbReference>
<dbReference type="PANTHER" id="PTHR13479:SF40">
    <property type="entry name" value="SMALL RIBOSOMAL SUBUNIT PROTEIN BS18M"/>
    <property type="match status" value="1"/>
</dbReference>
<dbReference type="Pfam" id="PF01084">
    <property type="entry name" value="Ribosomal_S18"/>
    <property type="match status" value="1"/>
</dbReference>
<dbReference type="PRINTS" id="PR00974">
    <property type="entry name" value="RIBOSOMALS18"/>
</dbReference>
<dbReference type="SUPFAM" id="SSF46911">
    <property type="entry name" value="Ribosomal protein S18"/>
    <property type="match status" value="1"/>
</dbReference>
<dbReference type="PROSITE" id="PS00057">
    <property type="entry name" value="RIBOSOMAL_S18"/>
    <property type="match status" value="1"/>
</dbReference>
<sequence>MARYFRRRKFCRFTAENVVEIDYKDIATLKNYITESGKIVPSRITGTRAKYQRQLARAIKRARYLALLPYTDNHQ</sequence>
<comment type="function">
    <text evidence="1">Binds as a heterodimer with protein bS6 to the central domain of the 16S rRNA, where it helps stabilize the platform of the 30S subunit.</text>
</comment>
<comment type="subunit">
    <text evidence="1">Part of the 30S ribosomal subunit. Forms a tight heterodimer with protein bS6.</text>
</comment>
<comment type="similarity">
    <text evidence="1">Belongs to the bacterial ribosomal protein bS18 family.</text>
</comment>
<evidence type="ECO:0000255" key="1">
    <source>
        <dbReference type="HAMAP-Rule" id="MF_00270"/>
    </source>
</evidence>
<evidence type="ECO:0000305" key="2"/>
<proteinExistence type="inferred from homology"/>
<reference key="1">
    <citation type="journal article" date="2004" name="Nat. Biotechnol.">
        <title>The genome sequence of the capnophilic rumen bacterium Mannheimia succiniciproducens.</title>
        <authorList>
            <person name="Hong S.H."/>
            <person name="Kim J.S."/>
            <person name="Lee S.Y."/>
            <person name="In Y.H."/>
            <person name="Choi S.S."/>
            <person name="Rih J.-K."/>
            <person name="Kim C.H."/>
            <person name="Jeong H."/>
            <person name="Hur C.G."/>
            <person name="Kim J.J."/>
        </authorList>
    </citation>
    <scope>NUCLEOTIDE SEQUENCE [LARGE SCALE GENOMIC DNA]</scope>
    <source>
        <strain>KCTC 0769BP / MBEL55E</strain>
    </source>
</reference>
<feature type="chain" id="PRO_0000111174" description="Small ribosomal subunit protein bS18">
    <location>
        <begin position="1"/>
        <end position="75"/>
    </location>
</feature>
<name>RS18_MANSM</name>